<keyword id="KW-0963">Cytoplasm</keyword>
<keyword id="KW-0413">Isomerase</keyword>
<keyword id="KW-0464">Manganese</keyword>
<keyword id="KW-0479">Metal-binding</keyword>
<gene>
    <name evidence="1" type="primary">deoB</name>
    <name type="ordered locus">VV1_1727</name>
</gene>
<name>DEOB_VIBVU</name>
<sequence length="406" mass="44106">MKRAFILVLDSFGIGATADAKEFGDVGSDTLGHIADQCEQGLANNDQRQGALRLPNLSKLGLAMAHKESTGRFAPGLDADAEIIGAYGHAAELSSGKDTPSGHWEIAGVPVLFEWGYFTDKANSFPKELTDRILARAGIDGFLGNCHASGTQVLDDLGEEHMKTGQPIFYTSADSVFQIACHEETFGLDRLLELCQIAREELADYNIGRVIARPFIGPGKGQFERTGNRRDLSVEPPSATVLQKLAEEKQGQVVSIGKIADIYANCGITKKVKATGIPALFEATLEQIKQAGDNTIVFTNFVDFDSAYGHRRDVAGYAAALEYFDGRIHEVMELMQEDDILILTADHGCDPTWPGTDHTREHIPVLVYGQKVPAGSLGRRETFADIGQTLASYFGTSPMDYGKNFL</sequence>
<organism>
    <name type="scientific">Vibrio vulnificus (strain CMCP6)</name>
    <dbReference type="NCBI Taxonomy" id="216895"/>
    <lineage>
        <taxon>Bacteria</taxon>
        <taxon>Pseudomonadati</taxon>
        <taxon>Pseudomonadota</taxon>
        <taxon>Gammaproteobacteria</taxon>
        <taxon>Vibrionales</taxon>
        <taxon>Vibrionaceae</taxon>
        <taxon>Vibrio</taxon>
    </lineage>
</organism>
<protein>
    <recommendedName>
        <fullName evidence="1">Phosphopentomutase</fullName>
        <ecNumber evidence="1">5.4.2.7</ecNumber>
    </recommendedName>
    <alternativeName>
        <fullName evidence="1">Phosphodeoxyribomutase</fullName>
    </alternativeName>
</protein>
<proteinExistence type="inferred from homology"/>
<dbReference type="EC" id="5.4.2.7" evidence="1"/>
<dbReference type="EMBL" id="AE016795">
    <property type="protein sequence ID" value="AAO10142.1"/>
    <property type="molecule type" value="Genomic_DNA"/>
</dbReference>
<dbReference type="RefSeq" id="WP_011079644.1">
    <property type="nucleotide sequence ID" value="NC_004459.3"/>
</dbReference>
<dbReference type="SMR" id="Q8DBT0"/>
<dbReference type="KEGG" id="vvu:VV1_1727"/>
<dbReference type="HOGENOM" id="CLU_053861_0_0_6"/>
<dbReference type="UniPathway" id="UPA00002">
    <property type="reaction ID" value="UER00467"/>
</dbReference>
<dbReference type="Proteomes" id="UP000002275">
    <property type="component" value="Chromosome 1"/>
</dbReference>
<dbReference type="GO" id="GO:0005829">
    <property type="term" value="C:cytosol"/>
    <property type="evidence" value="ECO:0007669"/>
    <property type="project" value="TreeGrafter"/>
</dbReference>
<dbReference type="GO" id="GO:0000287">
    <property type="term" value="F:magnesium ion binding"/>
    <property type="evidence" value="ECO:0007669"/>
    <property type="project" value="InterPro"/>
</dbReference>
<dbReference type="GO" id="GO:0030145">
    <property type="term" value="F:manganese ion binding"/>
    <property type="evidence" value="ECO:0007669"/>
    <property type="project" value="UniProtKB-UniRule"/>
</dbReference>
<dbReference type="GO" id="GO:0008973">
    <property type="term" value="F:phosphopentomutase activity"/>
    <property type="evidence" value="ECO:0007669"/>
    <property type="project" value="UniProtKB-UniRule"/>
</dbReference>
<dbReference type="GO" id="GO:0006018">
    <property type="term" value="P:2-deoxyribose 1-phosphate catabolic process"/>
    <property type="evidence" value="ECO:0007669"/>
    <property type="project" value="UniProtKB-UniRule"/>
</dbReference>
<dbReference type="GO" id="GO:0006015">
    <property type="term" value="P:5-phosphoribose 1-diphosphate biosynthetic process"/>
    <property type="evidence" value="ECO:0007669"/>
    <property type="project" value="UniProtKB-UniPathway"/>
</dbReference>
<dbReference type="GO" id="GO:0043094">
    <property type="term" value="P:metabolic compound salvage"/>
    <property type="evidence" value="ECO:0007669"/>
    <property type="project" value="InterPro"/>
</dbReference>
<dbReference type="GO" id="GO:0009117">
    <property type="term" value="P:nucleotide metabolic process"/>
    <property type="evidence" value="ECO:0007669"/>
    <property type="project" value="InterPro"/>
</dbReference>
<dbReference type="CDD" id="cd16009">
    <property type="entry name" value="PPM"/>
    <property type="match status" value="1"/>
</dbReference>
<dbReference type="FunFam" id="3.30.70.1250:FF:000001">
    <property type="entry name" value="Phosphopentomutase"/>
    <property type="match status" value="1"/>
</dbReference>
<dbReference type="Gene3D" id="3.40.720.10">
    <property type="entry name" value="Alkaline Phosphatase, subunit A"/>
    <property type="match status" value="1"/>
</dbReference>
<dbReference type="Gene3D" id="3.30.70.1250">
    <property type="entry name" value="Phosphopentomutase"/>
    <property type="match status" value="1"/>
</dbReference>
<dbReference type="HAMAP" id="MF_00740">
    <property type="entry name" value="Phosphopentomut"/>
    <property type="match status" value="1"/>
</dbReference>
<dbReference type="InterPro" id="IPR017850">
    <property type="entry name" value="Alkaline_phosphatase_core_sf"/>
</dbReference>
<dbReference type="InterPro" id="IPR010045">
    <property type="entry name" value="DeoB"/>
</dbReference>
<dbReference type="InterPro" id="IPR006124">
    <property type="entry name" value="Metalloenzyme"/>
</dbReference>
<dbReference type="InterPro" id="IPR024052">
    <property type="entry name" value="Phosphopentomutase_DeoB_cap_sf"/>
</dbReference>
<dbReference type="NCBIfam" id="TIGR01696">
    <property type="entry name" value="deoB"/>
    <property type="match status" value="1"/>
</dbReference>
<dbReference type="NCBIfam" id="NF003766">
    <property type="entry name" value="PRK05362.1"/>
    <property type="match status" value="1"/>
</dbReference>
<dbReference type="PANTHER" id="PTHR21110">
    <property type="entry name" value="PHOSPHOPENTOMUTASE"/>
    <property type="match status" value="1"/>
</dbReference>
<dbReference type="PANTHER" id="PTHR21110:SF0">
    <property type="entry name" value="PHOSPHOPENTOMUTASE"/>
    <property type="match status" value="1"/>
</dbReference>
<dbReference type="Pfam" id="PF01676">
    <property type="entry name" value="Metalloenzyme"/>
    <property type="match status" value="1"/>
</dbReference>
<dbReference type="PIRSF" id="PIRSF001491">
    <property type="entry name" value="Ppentomutase"/>
    <property type="match status" value="1"/>
</dbReference>
<dbReference type="SUPFAM" id="SSF53649">
    <property type="entry name" value="Alkaline phosphatase-like"/>
    <property type="match status" value="1"/>
</dbReference>
<dbReference type="SUPFAM" id="SSF143856">
    <property type="entry name" value="DeoB insert domain-like"/>
    <property type="match status" value="1"/>
</dbReference>
<feature type="chain" id="PRO_0000199863" description="Phosphopentomutase">
    <location>
        <begin position="1"/>
        <end position="406"/>
    </location>
</feature>
<feature type="binding site" evidence="1">
    <location>
        <position position="10"/>
    </location>
    <ligand>
        <name>Mn(2+)</name>
        <dbReference type="ChEBI" id="CHEBI:29035"/>
        <label>1</label>
    </ligand>
</feature>
<feature type="binding site" evidence="1">
    <location>
        <position position="305"/>
    </location>
    <ligand>
        <name>Mn(2+)</name>
        <dbReference type="ChEBI" id="CHEBI:29035"/>
        <label>2</label>
    </ligand>
</feature>
<feature type="binding site" evidence="1">
    <location>
        <position position="310"/>
    </location>
    <ligand>
        <name>Mn(2+)</name>
        <dbReference type="ChEBI" id="CHEBI:29035"/>
        <label>2</label>
    </ligand>
</feature>
<feature type="binding site" evidence="1">
    <location>
        <position position="346"/>
    </location>
    <ligand>
        <name>Mn(2+)</name>
        <dbReference type="ChEBI" id="CHEBI:29035"/>
        <label>1</label>
    </ligand>
</feature>
<feature type="binding site" evidence="1">
    <location>
        <position position="347"/>
    </location>
    <ligand>
        <name>Mn(2+)</name>
        <dbReference type="ChEBI" id="CHEBI:29035"/>
        <label>1</label>
    </ligand>
</feature>
<feature type="binding site" evidence="1">
    <location>
        <position position="358"/>
    </location>
    <ligand>
        <name>Mn(2+)</name>
        <dbReference type="ChEBI" id="CHEBI:29035"/>
        <label>2</label>
    </ligand>
</feature>
<accession>Q8DBT0</accession>
<evidence type="ECO:0000255" key="1">
    <source>
        <dbReference type="HAMAP-Rule" id="MF_00740"/>
    </source>
</evidence>
<reference key="1">
    <citation type="submission" date="2002-12" db="EMBL/GenBank/DDBJ databases">
        <title>Complete genome sequence of Vibrio vulnificus CMCP6.</title>
        <authorList>
            <person name="Rhee J.H."/>
            <person name="Kim S.Y."/>
            <person name="Chung S.S."/>
            <person name="Kim J.J."/>
            <person name="Moon Y.H."/>
            <person name="Jeong H."/>
            <person name="Choy H.E."/>
        </authorList>
    </citation>
    <scope>NUCLEOTIDE SEQUENCE [LARGE SCALE GENOMIC DNA]</scope>
    <source>
        <strain>CMCP6</strain>
    </source>
</reference>
<comment type="function">
    <text evidence="1">Isomerase that catalyzes the conversion of deoxy-ribose 1-phosphate (dRib-1-P) and ribose 1-phosphate (Rib-1-P) to deoxy-ribose 5-phosphate (dRib-5-P) and ribose 5-phosphate (Rib-5-P), respectively.</text>
</comment>
<comment type="catalytic activity">
    <reaction evidence="1">
        <text>2-deoxy-alpha-D-ribose 1-phosphate = 2-deoxy-D-ribose 5-phosphate</text>
        <dbReference type="Rhea" id="RHEA:27658"/>
        <dbReference type="ChEBI" id="CHEBI:57259"/>
        <dbReference type="ChEBI" id="CHEBI:62877"/>
        <dbReference type="EC" id="5.4.2.7"/>
    </reaction>
</comment>
<comment type="catalytic activity">
    <reaction evidence="1">
        <text>alpha-D-ribose 1-phosphate = D-ribose 5-phosphate</text>
        <dbReference type="Rhea" id="RHEA:18793"/>
        <dbReference type="ChEBI" id="CHEBI:57720"/>
        <dbReference type="ChEBI" id="CHEBI:78346"/>
        <dbReference type="EC" id="5.4.2.7"/>
    </reaction>
</comment>
<comment type="cofactor">
    <cofactor evidence="1">
        <name>Mn(2+)</name>
        <dbReference type="ChEBI" id="CHEBI:29035"/>
    </cofactor>
    <text evidence="1">Binds 2 manganese ions.</text>
</comment>
<comment type="pathway">
    <text evidence="1">Carbohydrate degradation; 2-deoxy-D-ribose 1-phosphate degradation; D-glyceraldehyde 3-phosphate and acetaldehyde from 2-deoxy-alpha-D-ribose 1-phosphate: step 1/2.</text>
</comment>
<comment type="subcellular location">
    <subcellularLocation>
        <location evidence="1">Cytoplasm</location>
    </subcellularLocation>
</comment>
<comment type="similarity">
    <text evidence="1">Belongs to the phosphopentomutase family.</text>
</comment>